<dbReference type="EC" id="3.1.11.6" evidence="1"/>
<dbReference type="EMBL" id="CP000248">
    <property type="protein sequence ID" value="ABD26691.1"/>
    <property type="molecule type" value="Genomic_DNA"/>
</dbReference>
<dbReference type="RefSeq" id="WP_011445897.1">
    <property type="nucleotide sequence ID" value="NC_007794.1"/>
</dbReference>
<dbReference type="SMR" id="Q2G632"/>
<dbReference type="STRING" id="279238.Saro_2254"/>
<dbReference type="KEGG" id="nar:Saro_2254"/>
<dbReference type="eggNOG" id="COG1722">
    <property type="taxonomic scope" value="Bacteria"/>
</dbReference>
<dbReference type="HOGENOM" id="CLU_145918_0_3_5"/>
<dbReference type="Proteomes" id="UP000009134">
    <property type="component" value="Chromosome"/>
</dbReference>
<dbReference type="GO" id="GO:0005829">
    <property type="term" value="C:cytosol"/>
    <property type="evidence" value="ECO:0007669"/>
    <property type="project" value="TreeGrafter"/>
</dbReference>
<dbReference type="GO" id="GO:0009318">
    <property type="term" value="C:exodeoxyribonuclease VII complex"/>
    <property type="evidence" value="ECO:0007669"/>
    <property type="project" value="InterPro"/>
</dbReference>
<dbReference type="GO" id="GO:0008855">
    <property type="term" value="F:exodeoxyribonuclease VII activity"/>
    <property type="evidence" value="ECO:0007669"/>
    <property type="project" value="UniProtKB-UniRule"/>
</dbReference>
<dbReference type="GO" id="GO:0006308">
    <property type="term" value="P:DNA catabolic process"/>
    <property type="evidence" value="ECO:0007669"/>
    <property type="project" value="UniProtKB-UniRule"/>
</dbReference>
<dbReference type="Gene3D" id="1.10.287.1040">
    <property type="entry name" value="Exonuclease VII, small subunit"/>
    <property type="match status" value="1"/>
</dbReference>
<dbReference type="HAMAP" id="MF_00337">
    <property type="entry name" value="Exonuc_7_S"/>
    <property type="match status" value="1"/>
</dbReference>
<dbReference type="InterPro" id="IPR003761">
    <property type="entry name" value="Exonuc_VII_S"/>
</dbReference>
<dbReference type="InterPro" id="IPR037004">
    <property type="entry name" value="Exonuc_VII_ssu_sf"/>
</dbReference>
<dbReference type="NCBIfam" id="NF002139">
    <property type="entry name" value="PRK00977.1-3"/>
    <property type="match status" value="1"/>
</dbReference>
<dbReference type="NCBIfam" id="TIGR01280">
    <property type="entry name" value="xseB"/>
    <property type="match status" value="1"/>
</dbReference>
<dbReference type="PANTHER" id="PTHR34137">
    <property type="entry name" value="EXODEOXYRIBONUCLEASE 7 SMALL SUBUNIT"/>
    <property type="match status" value="1"/>
</dbReference>
<dbReference type="PANTHER" id="PTHR34137:SF1">
    <property type="entry name" value="EXODEOXYRIBONUCLEASE 7 SMALL SUBUNIT"/>
    <property type="match status" value="1"/>
</dbReference>
<dbReference type="Pfam" id="PF02609">
    <property type="entry name" value="Exonuc_VII_S"/>
    <property type="match status" value="1"/>
</dbReference>
<dbReference type="SUPFAM" id="SSF116842">
    <property type="entry name" value="XseB-like"/>
    <property type="match status" value="1"/>
</dbReference>
<protein>
    <recommendedName>
        <fullName evidence="1">Exodeoxyribonuclease 7 small subunit</fullName>
        <ecNumber evidence="1">3.1.11.6</ecNumber>
    </recommendedName>
    <alternativeName>
        <fullName evidence="1">Exodeoxyribonuclease VII small subunit</fullName>
        <shortName evidence="1">Exonuclease VII small subunit</shortName>
    </alternativeName>
</protein>
<keyword id="KW-0963">Cytoplasm</keyword>
<keyword id="KW-0269">Exonuclease</keyword>
<keyword id="KW-0378">Hydrolase</keyword>
<keyword id="KW-0540">Nuclease</keyword>
<keyword id="KW-1185">Reference proteome</keyword>
<name>EX7S_NOVAD</name>
<comment type="function">
    <text evidence="1">Bidirectionally degrades single-stranded DNA into large acid-insoluble oligonucleotides, which are then degraded further into small acid-soluble oligonucleotides.</text>
</comment>
<comment type="catalytic activity">
    <reaction evidence="1">
        <text>Exonucleolytic cleavage in either 5'- to 3'- or 3'- to 5'-direction to yield nucleoside 5'-phosphates.</text>
        <dbReference type="EC" id="3.1.11.6"/>
    </reaction>
</comment>
<comment type="subunit">
    <text evidence="1">Heterooligomer composed of large and small subunits.</text>
</comment>
<comment type="subcellular location">
    <subcellularLocation>
        <location evidence="1">Cytoplasm</location>
    </subcellularLocation>
</comment>
<comment type="similarity">
    <text evidence="1">Belongs to the XseB family.</text>
</comment>
<evidence type="ECO:0000255" key="1">
    <source>
        <dbReference type="HAMAP-Rule" id="MF_00337"/>
    </source>
</evidence>
<reference key="1">
    <citation type="submission" date="2006-01" db="EMBL/GenBank/DDBJ databases">
        <title>Complete sequence of Novosphingobium aromaticivorans DSM 12444.</title>
        <authorList>
            <consortium name="US DOE Joint Genome Institute"/>
            <person name="Copeland A."/>
            <person name="Lucas S."/>
            <person name="Lapidus A."/>
            <person name="Barry K."/>
            <person name="Detter J.C."/>
            <person name="Glavina T."/>
            <person name="Hammon N."/>
            <person name="Israni S."/>
            <person name="Pitluck S."/>
            <person name="Chain P."/>
            <person name="Malfatti S."/>
            <person name="Shin M."/>
            <person name="Vergez L."/>
            <person name="Schmutz J."/>
            <person name="Larimer F."/>
            <person name="Land M."/>
            <person name="Kyrpides N."/>
            <person name="Ivanova N."/>
            <person name="Fredrickson J."/>
            <person name="Balkwill D."/>
            <person name="Romine M.F."/>
            <person name="Richardson P."/>
        </authorList>
    </citation>
    <scope>NUCLEOTIDE SEQUENCE [LARGE SCALE GENOMIC DNA]</scope>
    <source>
        <strain>ATCC 700278 / DSM 12444 / CCUG 56034 / CIP 105152 / NBRC 16084 / F199</strain>
    </source>
</reference>
<proteinExistence type="inferred from homology"/>
<sequence length="83" mass="9037">MGTVPELASLSFEEALKELENVVRRLESGEAPLDESIELYARGDALRAHCQARLDAAQARIEAIVADRDGKAQGLRPFDETVG</sequence>
<organism>
    <name type="scientific">Novosphingobium aromaticivorans (strain ATCC 700278 / DSM 12444 / CCUG 56034 / CIP 105152 / NBRC 16084 / F199)</name>
    <dbReference type="NCBI Taxonomy" id="279238"/>
    <lineage>
        <taxon>Bacteria</taxon>
        <taxon>Pseudomonadati</taxon>
        <taxon>Pseudomonadota</taxon>
        <taxon>Alphaproteobacteria</taxon>
        <taxon>Sphingomonadales</taxon>
        <taxon>Sphingomonadaceae</taxon>
        <taxon>Novosphingobium</taxon>
    </lineage>
</organism>
<feature type="chain" id="PRO_0000303730" description="Exodeoxyribonuclease 7 small subunit">
    <location>
        <begin position="1"/>
        <end position="83"/>
    </location>
</feature>
<accession>Q2G632</accession>
<gene>
    <name evidence="1" type="primary">xseB</name>
    <name type="ordered locus">Saro_2254</name>
</gene>